<gene>
    <name type="ordered locus">lp_1753</name>
</gene>
<feature type="chain" id="PRO_0000267160" description="UPF0398 protein lp_1753">
    <location>
        <begin position="1"/>
        <end position="189"/>
    </location>
</feature>
<accession>Q88W96</accession>
<accession>F9UPA7</accession>
<dbReference type="EMBL" id="AL935263">
    <property type="protein sequence ID" value="CCC79046.1"/>
    <property type="molecule type" value="Genomic_DNA"/>
</dbReference>
<dbReference type="RefSeq" id="WP_003640485.1">
    <property type="nucleotide sequence ID" value="NC_004567.2"/>
</dbReference>
<dbReference type="RefSeq" id="YP_004889560.1">
    <property type="nucleotide sequence ID" value="NC_004567.2"/>
</dbReference>
<dbReference type="SMR" id="Q88W96"/>
<dbReference type="STRING" id="220668.lp_1753"/>
<dbReference type="EnsemblBacteria" id="CCC79046">
    <property type="protein sequence ID" value="CCC79046"/>
    <property type="gene ID" value="lp_1753"/>
</dbReference>
<dbReference type="KEGG" id="lpl:lp_1753"/>
<dbReference type="PATRIC" id="fig|220668.9.peg.1479"/>
<dbReference type="eggNOG" id="COG4474">
    <property type="taxonomic scope" value="Bacteria"/>
</dbReference>
<dbReference type="HOGENOM" id="CLU_105319_0_0_9"/>
<dbReference type="OrthoDB" id="2301957at2"/>
<dbReference type="PhylomeDB" id="Q88W96"/>
<dbReference type="Proteomes" id="UP000000432">
    <property type="component" value="Chromosome"/>
</dbReference>
<dbReference type="Gene3D" id="3.40.50.450">
    <property type="match status" value="1"/>
</dbReference>
<dbReference type="HAMAP" id="MF_01575">
    <property type="entry name" value="UPF0398"/>
    <property type="match status" value="1"/>
</dbReference>
<dbReference type="InterPro" id="IPR010697">
    <property type="entry name" value="YspA"/>
</dbReference>
<dbReference type="NCBIfam" id="NF010181">
    <property type="entry name" value="PRK13660.1"/>
    <property type="match status" value="1"/>
</dbReference>
<dbReference type="PANTHER" id="PTHR38440:SF1">
    <property type="entry name" value="UPF0398 PROTEIN SPR0331"/>
    <property type="match status" value="1"/>
</dbReference>
<dbReference type="PANTHER" id="PTHR38440">
    <property type="entry name" value="UPF0398 PROTEIN YPSA"/>
    <property type="match status" value="1"/>
</dbReference>
<dbReference type="Pfam" id="PF06908">
    <property type="entry name" value="YpsA"/>
    <property type="match status" value="1"/>
</dbReference>
<dbReference type="PIRSF" id="PIRSF021290">
    <property type="entry name" value="DUF1273"/>
    <property type="match status" value="1"/>
</dbReference>
<dbReference type="SUPFAM" id="SSF102405">
    <property type="entry name" value="MCP/YpsA-like"/>
    <property type="match status" value="1"/>
</dbReference>
<reference key="1">
    <citation type="journal article" date="2003" name="Proc. Natl. Acad. Sci. U.S.A.">
        <title>Complete genome sequence of Lactobacillus plantarum WCFS1.</title>
        <authorList>
            <person name="Kleerebezem M."/>
            <person name="Boekhorst J."/>
            <person name="van Kranenburg R."/>
            <person name="Molenaar D."/>
            <person name="Kuipers O.P."/>
            <person name="Leer R."/>
            <person name="Tarchini R."/>
            <person name="Peters S.A."/>
            <person name="Sandbrink H.M."/>
            <person name="Fiers M.W.E.J."/>
            <person name="Stiekema W."/>
            <person name="Klein Lankhorst R.M."/>
            <person name="Bron P.A."/>
            <person name="Hoffer S.M."/>
            <person name="Nierop Groot M.N."/>
            <person name="Kerkhoven R."/>
            <person name="De Vries M."/>
            <person name="Ursing B."/>
            <person name="De Vos W.M."/>
            <person name="Siezen R.J."/>
        </authorList>
    </citation>
    <scope>NUCLEOTIDE SEQUENCE [LARGE SCALE GENOMIC DNA]</scope>
    <source>
        <strain>ATCC BAA-793 / NCIMB 8826 / WCFS1</strain>
    </source>
</reference>
<reference key="2">
    <citation type="journal article" date="2012" name="J. Bacteriol.">
        <title>Complete resequencing and reannotation of the Lactobacillus plantarum WCFS1 genome.</title>
        <authorList>
            <person name="Siezen R.J."/>
            <person name="Francke C."/>
            <person name="Renckens B."/>
            <person name="Boekhorst J."/>
            <person name="Wels M."/>
            <person name="Kleerebezem M."/>
            <person name="van Hijum S.A."/>
        </authorList>
    </citation>
    <scope>NUCLEOTIDE SEQUENCE [LARGE SCALE GENOMIC DNA]</scope>
    <scope>GENOME REANNOTATION</scope>
    <source>
        <strain>ATCC BAA-793 / NCIMB 8826 / WCFS1</strain>
    </source>
</reference>
<name>Y1753_LACPL</name>
<comment type="similarity">
    <text evidence="1">Belongs to the UPF0398 family.</text>
</comment>
<sequence length="189" mass="21926">MSRLWLSGYRSYELNVFGDQDDKLKVIKFALTNYLTTQIEDGMDWLITGGQLGIEQWTAEVGLTLKKTYPELKVAMMLPYGEFGGRWNENNQAKLQTLLAQVDFHAPVSKQPYENPQQLKNYQEFMVTHTDAATLVYDPDNPGKPTYDYDLIRNFSDTHPYPLTLIDFDWLQESANEYAEKQNNGFNFE</sequence>
<evidence type="ECO:0000255" key="1">
    <source>
        <dbReference type="HAMAP-Rule" id="MF_01575"/>
    </source>
</evidence>
<protein>
    <recommendedName>
        <fullName evidence="1">UPF0398 protein lp_1753</fullName>
    </recommendedName>
</protein>
<keyword id="KW-1185">Reference proteome</keyword>
<organism>
    <name type="scientific">Lactiplantibacillus plantarum (strain ATCC BAA-793 / NCIMB 8826 / WCFS1)</name>
    <name type="common">Lactobacillus plantarum</name>
    <dbReference type="NCBI Taxonomy" id="220668"/>
    <lineage>
        <taxon>Bacteria</taxon>
        <taxon>Bacillati</taxon>
        <taxon>Bacillota</taxon>
        <taxon>Bacilli</taxon>
        <taxon>Lactobacillales</taxon>
        <taxon>Lactobacillaceae</taxon>
        <taxon>Lactiplantibacillus</taxon>
    </lineage>
</organism>
<proteinExistence type="inferred from homology"/>